<organism>
    <name type="scientific">Mycolicibacterium gilvum (strain PYR-GCK)</name>
    <name type="common">Mycobacterium gilvum (strain PYR-GCK)</name>
    <dbReference type="NCBI Taxonomy" id="350054"/>
    <lineage>
        <taxon>Bacteria</taxon>
        <taxon>Bacillati</taxon>
        <taxon>Actinomycetota</taxon>
        <taxon>Actinomycetes</taxon>
        <taxon>Mycobacteriales</taxon>
        <taxon>Mycobacteriaceae</taxon>
        <taxon>Mycolicibacterium</taxon>
    </lineage>
</organism>
<reference key="1">
    <citation type="submission" date="2007-04" db="EMBL/GenBank/DDBJ databases">
        <title>Complete sequence of chromosome of Mycobacterium gilvum PYR-GCK.</title>
        <authorList>
            <consortium name="US DOE Joint Genome Institute"/>
            <person name="Copeland A."/>
            <person name="Lucas S."/>
            <person name="Lapidus A."/>
            <person name="Barry K."/>
            <person name="Detter J.C."/>
            <person name="Glavina del Rio T."/>
            <person name="Hammon N."/>
            <person name="Israni S."/>
            <person name="Dalin E."/>
            <person name="Tice H."/>
            <person name="Pitluck S."/>
            <person name="Chain P."/>
            <person name="Malfatti S."/>
            <person name="Shin M."/>
            <person name="Vergez L."/>
            <person name="Schmutz J."/>
            <person name="Larimer F."/>
            <person name="Land M."/>
            <person name="Hauser L."/>
            <person name="Kyrpides N."/>
            <person name="Mikhailova N."/>
            <person name="Miller C."/>
            <person name="Richardson P."/>
        </authorList>
    </citation>
    <scope>NUCLEOTIDE SEQUENCE [LARGE SCALE GENOMIC DNA]</scope>
    <source>
        <strain>PYR-GCK</strain>
    </source>
</reference>
<name>GCH1_MYCGI</name>
<gene>
    <name evidence="1" type="primary">folE</name>
    <name type="ordered locus">Mflv_1417</name>
</gene>
<keyword id="KW-0342">GTP-binding</keyword>
<keyword id="KW-0378">Hydrolase</keyword>
<keyword id="KW-0479">Metal-binding</keyword>
<keyword id="KW-0547">Nucleotide-binding</keyword>
<keyword id="KW-0554">One-carbon metabolism</keyword>
<keyword id="KW-0862">Zinc</keyword>
<proteinExistence type="inferred from homology"/>
<sequence>MTRSHNHSATLTTPDFDQARAEAAVRELLIAVGEDPDREGLLDTPARVARSYREIFAGLYTDPDEVLTTMFDEQHDEMVLVKDIPMYSTCEHHLVSFHGVAHVGYIPGVDGRVTGLSKLARVVDLYAKRPQVQERLTSQIADALMRKLDPRGAIVVIEAEHLCMAMRGIRKPGAVTTTSAVRGQFKTDKASRAEALDLILRK</sequence>
<protein>
    <recommendedName>
        <fullName evidence="1">GTP cyclohydrolase 1</fullName>
        <ecNumber evidence="1">3.5.4.16</ecNumber>
    </recommendedName>
    <alternativeName>
        <fullName evidence="1">GTP cyclohydrolase I</fullName>
        <shortName evidence="1">GTP-CH-I</shortName>
    </alternativeName>
</protein>
<accession>A4T5P2</accession>
<comment type="catalytic activity">
    <reaction evidence="1">
        <text>GTP + H2O = 7,8-dihydroneopterin 3'-triphosphate + formate + H(+)</text>
        <dbReference type="Rhea" id="RHEA:17473"/>
        <dbReference type="ChEBI" id="CHEBI:15377"/>
        <dbReference type="ChEBI" id="CHEBI:15378"/>
        <dbReference type="ChEBI" id="CHEBI:15740"/>
        <dbReference type="ChEBI" id="CHEBI:37565"/>
        <dbReference type="ChEBI" id="CHEBI:58462"/>
        <dbReference type="EC" id="3.5.4.16"/>
    </reaction>
</comment>
<comment type="pathway">
    <text evidence="1">Cofactor biosynthesis; 7,8-dihydroneopterin triphosphate biosynthesis; 7,8-dihydroneopterin triphosphate from GTP: step 1/1.</text>
</comment>
<comment type="subunit">
    <text evidence="1">Homomer.</text>
</comment>
<comment type="similarity">
    <text evidence="1">Belongs to the GTP cyclohydrolase I family.</text>
</comment>
<dbReference type="EC" id="3.5.4.16" evidence="1"/>
<dbReference type="EMBL" id="CP000656">
    <property type="protein sequence ID" value="ABP43899.1"/>
    <property type="molecule type" value="Genomic_DNA"/>
</dbReference>
<dbReference type="SMR" id="A4T5P2"/>
<dbReference type="STRING" id="350054.Mflv_1417"/>
<dbReference type="KEGG" id="mgi:Mflv_1417"/>
<dbReference type="eggNOG" id="COG0302">
    <property type="taxonomic scope" value="Bacteria"/>
</dbReference>
<dbReference type="HOGENOM" id="CLU_049768_3_3_11"/>
<dbReference type="OrthoDB" id="9801207at2"/>
<dbReference type="UniPathway" id="UPA00848">
    <property type="reaction ID" value="UER00151"/>
</dbReference>
<dbReference type="GO" id="GO:0005737">
    <property type="term" value="C:cytoplasm"/>
    <property type="evidence" value="ECO:0007669"/>
    <property type="project" value="TreeGrafter"/>
</dbReference>
<dbReference type="GO" id="GO:0005525">
    <property type="term" value="F:GTP binding"/>
    <property type="evidence" value="ECO:0007669"/>
    <property type="project" value="UniProtKB-KW"/>
</dbReference>
<dbReference type="GO" id="GO:0003934">
    <property type="term" value="F:GTP cyclohydrolase I activity"/>
    <property type="evidence" value="ECO:0007669"/>
    <property type="project" value="UniProtKB-UniRule"/>
</dbReference>
<dbReference type="GO" id="GO:0008270">
    <property type="term" value="F:zinc ion binding"/>
    <property type="evidence" value="ECO:0007669"/>
    <property type="project" value="UniProtKB-UniRule"/>
</dbReference>
<dbReference type="GO" id="GO:0006730">
    <property type="term" value="P:one-carbon metabolic process"/>
    <property type="evidence" value="ECO:0007669"/>
    <property type="project" value="UniProtKB-UniRule"/>
</dbReference>
<dbReference type="GO" id="GO:0006729">
    <property type="term" value="P:tetrahydrobiopterin biosynthetic process"/>
    <property type="evidence" value="ECO:0007669"/>
    <property type="project" value="TreeGrafter"/>
</dbReference>
<dbReference type="GO" id="GO:0046654">
    <property type="term" value="P:tetrahydrofolate biosynthetic process"/>
    <property type="evidence" value="ECO:0007669"/>
    <property type="project" value="UniProtKB-UniRule"/>
</dbReference>
<dbReference type="FunFam" id="1.10.286.10:FF:000001">
    <property type="entry name" value="GTP cyclohydrolase 1"/>
    <property type="match status" value="1"/>
</dbReference>
<dbReference type="FunFam" id="3.30.1130.10:FF:000001">
    <property type="entry name" value="GTP cyclohydrolase 1"/>
    <property type="match status" value="1"/>
</dbReference>
<dbReference type="Gene3D" id="1.10.286.10">
    <property type="match status" value="1"/>
</dbReference>
<dbReference type="Gene3D" id="3.30.1130.10">
    <property type="match status" value="1"/>
</dbReference>
<dbReference type="HAMAP" id="MF_00223">
    <property type="entry name" value="FolE"/>
    <property type="match status" value="1"/>
</dbReference>
<dbReference type="InterPro" id="IPR043133">
    <property type="entry name" value="GTP-CH-I_C/QueF"/>
</dbReference>
<dbReference type="InterPro" id="IPR043134">
    <property type="entry name" value="GTP-CH-I_N"/>
</dbReference>
<dbReference type="InterPro" id="IPR001474">
    <property type="entry name" value="GTP_CycHdrlase_I"/>
</dbReference>
<dbReference type="InterPro" id="IPR018234">
    <property type="entry name" value="GTP_CycHdrlase_I_CS"/>
</dbReference>
<dbReference type="InterPro" id="IPR020602">
    <property type="entry name" value="GTP_CycHdrlase_I_dom"/>
</dbReference>
<dbReference type="NCBIfam" id="TIGR00063">
    <property type="entry name" value="folE"/>
    <property type="match status" value="1"/>
</dbReference>
<dbReference type="NCBIfam" id="NF006825">
    <property type="entry name" value="PRK09347.1-2"/>
    <property type="match status" value="1"/>
</dbReference>
<dbReference type="NCBIfam" id="NF006826">
    <property type="entry name" value="PRK09347.1-3"/>
    <property type="match status" value="1"/>
</dbReference>
<dbReference type="PANTHER" id="PTHR11109:SF7">
    <property type="entry name" value="GTP CYCLOHYDROLASE 1"/>
    <property type="match status" value="1"/>
</dbReference>
<dbReference type="PANTHER" id="PTHR11109">
    <property type="entry name" value="GTP CYCLOHYDROLASE I"/>
    <property type="match status" value="1"/>
</dbReference>
<dbReference type="Pfam" id="PF01227">
    <property type="entry name" value="GTP_cyclohydroI"/>
    <property type="match status" value="1"/>
</dbReference>
<dbReference type="SUPFAM" id="SSF55620">
    <property type="entry name" value="Tetrahydrobiopterin biosynthesis enzymes-like"/>
    <property type="match status" value="1"/>
</dbReference>
<dbReference type="PROSITE" id="PS00859">
    <property type="entry name" value="GTP_CYCLOHYDROL_1_1"/>
    <property type="match status" value="1"/>
</dbReference>
<dbReference type="PROSITE" id="PS00860">
    <property type="entry name" value="GTP_CYCLOHYDROL_1_2"/>
    <property type="match status" value="1"/>
</dbReference>
<feature type="chain" id="PRO_1000078144" description="GTP cyclohydrolase 1">
    <location>
        <begin position="1"/>
        <end position="202"/>
    </location>
</feature>
<feature type="binding site" evidence="1">
    <location>
        <position position="90"/>
    </location>
    <ligand>
        <name>Zn(2+)</name>
        <dbReference type="ChEBI" id="CHEBI:29105"/>
    </ligand>
</feature>
<feature type="binding site" evidence="1">
    <location>
        <position position="93"/>
    </location>
    <ligand>
        <name>Zn(2+)</name>
        <dbReference type="ChEBI" id="CHEBI:29105"/>
    </ligand>
</feature>
<feature type="binding site" evidence="1">
    <location>
        <position position="163"/>
    </location>
    <ligand>
        <name>Zn(2+)</name>
        <dbReference type="ChEBI" id="CHEBI:29105"/>
    </ligand>
</feature>
<evidence type="ECO:0000255" key="1">
    <source>
        <dbReference type="HAMAP-Rule" id="MF_00223"/>
    </source>
</evidence>